<proteinExistence type="inferred from homology"/>
<organism>
    <name type="scientific">Saccharopolyspora erythraea (strain ATCC 11635 / DSM 40517 / JCM 4748 / NBRC 13426 / NCIMB 8594 / NRRL 2338)</name>
    <dbReference type="NCBI Taxonomy" id="405948"/>
    <lineage>
        <taxon>Bacteria</taxon>
        <taxon>Bacillati</taxon>
        <taxon>Actinomycetota</taxon>
        <taxon>Actinomycetes</taxon>
        <taxon>Pseudonocardiales</taxon>
        <taxon>Pseudonocardiaceae</taxon>
        <taxon>Saccharopolyspora</taxon>
    </lineage>
</organism>
<protein>
    <recommendedName>
        <fullName evidence="1">Phosphoenolpyruvate carboxykinase [GTP]</fullName>
        <shortName evidence="1">PEP carboxykinase</shortName>
        <shortName evidence="1">PEPCK</shortName>
        <ecNumber evidence="1">4.1.1.32</ecNumber>
    </recommendedName>
</protein>
<gene>
    <name evidence="1" type="primary">pckG</name>
    <name type="ordered locus">SACE_7274</name>
</gene>
<feature type="chain" id="PRO_1000060299" description="Phosphoenolpyruvate carboxykinase [GTP]">
    <location>
        <begin position="1"/>
        <end position="605"/>
    </location>
</feature>
<feature type="region of interest" description="Disordered" evidence="2">
    <location>
        <begin position="364"/>
        <end position="385"/>
    </location>
</feature>
<feature type="compositionally biased region" description="Basic and acidic residues" evidence="2">
    <location>
        <begin position="364"/>
        <end position="381"/>
    </location>
</feature>
<feature type="active site" evidence="1">
    <location>
        <position position="271"/>
    </location>
</feature>
<feature type="binding site" evidence="1">
    <location>
        <position position="79"/>
    </location>
    <ligand>
        <name>substrate</name>
    </ligand>
</feature>
<feature type="binding site" evidence="1">
    <location>
        <begin position="218"/>
        <end position="220"/>
    </location>
    <ligand>
        <name>substrate</name>
    </ligand>
</feature>
<feature type="binding site" evidence="1">
    <location>
        <position position="227"/>
    </location>
    <ligand>
        <name>Mn(2+)</name>
        <dbReference type="ChEBI" id="CHEBI:29035"/>
    </ligand>
</feature>
<feature type="binding site" evidence="1">
    <location>
        <position position="247"/>
    </location>
    <ligand>
        <name>Mn(2+)</name>
        <dbReference type="ChEBI" id="CHEBI:29035"/>
    </ligand>
</feature>
<feature type="binding site" evidence="1">
    <location>
        <position position="269"/>
    </location>
    <ligand>
        <name>substrate</name>
    </ligand>
</feature>
<feature type="binding site" evidence="1">
    <location>
        <begin position="270"/>
        <end position="275"/>
    </location>
    <ligand>
        <name>GTP</name>
        <dbReference type="ChEBI" id="CHEBI:37565"/>
    </ligand>
</feature>
<feature type="binding site" evidence="1">
    <location>
        <position position="294"/>
    </location>
    <ligand>
        <name>Mn(2+)</name>
        <dbReference type="ChEBI" id="CHEBI:29035"/>
    </ligand>
</feature>
<feature type="binding site" evidence="1">
    <location>
        <begin position="384"/>
        <end position="386"/>
    </location>
    <ligand>
        <name>substrate</name>
    </ligand>
</feature>
<feature type="binding site" evidence="1">
    <location>
        <position position="386"/>
    </location>
    <ligand>
        <name>GTP</name>
        <dbReference type="ChEBI" id="CHEBI:37565"/>
    </ligand>
</feature>
<feature type="binding site" evidence="1">
    <location>
        <position position="417"/>
    </location>
    <ligand>
        <name>GTP</name>
        <dbReference type="ChEBI" id="CHEBI:37565"/>
    </ligand>
</feature>
<feature type="binding site" evidence="1">
    <location>
        <begin position="513"/>
        <end position="516"/>
    </location>
    <ligand>
        <name>GTP</name>
        <dbReference type="ChEBI" id="CHEBI:37565"/>
    </ligand>
</feature>
<sequence length="605" mass="67840">MTSLTIPGLDQAPTTHARLLSWVREVAELTTPDRVVWCDGSQDEWQRLTEQLVEAGTFKRLEKKPNSFYAASDPSDVARVEERTFICSREEKDAGVTNYWMQPDEMKAIMTELYRGCMRGRTMYVIPFCMGPLDADKPKLGVEITDTAYVVVSMHIMTRMGSKVLERLGEDEDFVEALHSVGAPLEPGQQDVPWPCNDTKYITHFPEERKIWSFGSGYGGNALLGKKCFSLRIASAMARDEGWLAEHMLILKLISPEDKVHYVAAAFPSACGKTNLAMLQPTIPGWRVESLGDDIAWMRFGEDGRLYAVNPEAGFFGVAPGTNWKTNPNAMRTIDQGNSLFTNVALTDDGDVWWEEMEGEPQHLTDWKGRDWTPQSDEKAAHPNSRYCTPMSQCPILAPEWDDPNGVPISAILFGGRRKTTIPLVNEAFDWQHGVFMGATLSSEKTAAAAGKVGEVRRDPMAMLPFIGYNVGDYFQHWVNVGKEADSSKLPRIFYVNWFRRDESGKKIVWPGFGENSRVLKWIVERLDGNAAAEDTPIGRVPSADQIDLSGLDTPREDVETALHVDVEEWKAELPLIEEWFASIGDSLPSSMRDEFEALKQRLGA</sequence>
<keyword id="KW-0963">Cytoplasm</keyword>
<keyword id="KW-0210">Decarboxylase</keyword>
<keyword id="KW-0312">Gluconeogenesis</keyword>
<keyword id="KW-0342">GTP-binding</keyword>
<keyword id="KW-0456">Lyase</keyword>
<keyword id="KW-0464">Manganese</keyword>
<keyword id="KW-0479">Metal-binding</keyword>
<keyword id="KW-0547">Nucleotide-binding</keyword>
<keyword id="KW-1185">Reference proteome</keyword>
<comment type="function">
    <text evidence="1">Catalyzes the conversion of oxaloacetate (OAA) to phosphoenolpyruvate (PEP), the rate-limiting step in the metabolic pathway that produces glucose from lactate and other precursors derived from the citric acid cycle.</text>
</comment>
<comment type="catalytic activity">
    <reaction evidence="1">
        <text>oxaloacetate + GTP = phosphoenolpyruvate + GDP + CO2</text>
        <dbReference type="Rhea" id="RHEA:10388"/>
        <dbReference type="ChEBI" id="CHEBI:16452"/>
        <dbReference type="ChEBI" id="CHEBI:16526"/>
        <dbReference type="ChEBI" id="CHEBI:37565"/>
        <dbReference type="ChEBI" id="CHEBI:58189"/>
        <dbReference type="ChEBI" id="CHEBI:58702"/>
        <dbReference type="EC" id="4.1.1.32"/>
    </reaction>
</comment>
<comment type="cofactor">
    <cofactor evidence="1">
        <name>Mn(2+)</name>
        <dbReference type="ChEBI" id="CHEBI:29035"/>
    </cofactor>
    <text evidence="1">Binds 1 Mn(2+) ion per subunit.</text>
</comment>
<comment type="pathway">
    <text evidence="1">Carbohydrate biosynthesis; gluconeogenesis.</text>
</comment>
<comment type="subunit">
    <text evidence="1">Monomer.</text>
</comment>
<comment type="subcellular location">
    <subcellularLocation>
        <location evidence="1">Cytoplasm</location>
    </subcellularLocation>
</comment>
<comment type="similarity">
    <text evidence="1">Belongs to the phosphoenolpyruvate carboxykinase [GTP] family.</text>
</comment>
<evidence type="ECO:0000255" key="1">
    <source>
        <dbReference type="HAMAP-Rule" id="MF_00452"/>
    </source>
</evidence>
<evidence type="ECO:0000256" key="2">
    <source>
        <dbReference type="SAM" id="MobiDB-lite"/>
    </source>
</evidence>
<name>PCKG_SACEN</name>
<reference key="1">
    <citation type="journal article" date="2007" name="Nat. Biotechnol.">
        <title>Complete genome sequence of the erythromycin-producing bacterium Saccharopolyspora erythraea NRRL23338.</title>
        <authorList>
            <person name="Oliynyk M."/>
            <person name="Samborskyy M."/>
            <person name="Lester J.B."/>
            <person name="Mironenko T."/>
            <person name="Scott N."/>
            <person name="Dickens S."/>
            <person name="Haydock S.F."/>
            <person name="Leadlay P.F."/>
        </authorList>
    </citation>
    <scope>NUCLEOTIDE SEQUENCE [LARGE SCALE GENOMIC DNA]</scope>
    <source>
        <strain>ATCC 11635 / DSM 40517 / JCM 4748 / NBRC 13426 / NCIMB 8594 / NRRL 2338</strain>
    </source>
</reference>
<accession>A4FQV7</accession>
<dbReference type="EC" id="4.1.1.32" evidence="1"/>
<dbReference type="EMBL" id="AM420293">
    <property type="protein sequence ID" value="CAM06432.1"/>
    <property type="molecule type" value="Genomic_DNA"/>
</dbReference>
<dbReference type="RefSeq" id="WP_011875298.1">
    <property type="nucleotide sequence ID" value="NC_009142.1"/>
</dbReference>
<dbReference type="SMR" id="A4FQV7"/>
<dbReference type="STRING" id="405948.SACE_7274"/>
<dbReference type="KEGG" id="sen:SACE_7274"/>
<dbReference type="eggNOG" id="COG1274">
    <property type="taxonomic scope" value="Bacteria"/>
</dbReference>
<dbReference type="HOGENOM" id="CLU_028872_1_1_11"/>
<dbReference type="OrthoDB" id="9758871at2"/>
<dbReference type="UniPathway" id="UPA00138"/>
<dbReference type="Proteomes" id="UP000006728">
    <property type="component" value="Chromosome"/>
</dbReference>
<dbReference type="GO" id="GO:0005829">
    <property type="term" value="C:cytosol"/>
    <property type="evidence" value="ECO:0007669"/>
    <property type="project" value="TreeGrafter"/>
</dbReference>
<dbReference type="GO" id="GO:0005525">
    <property type="term" value="F:GTP binding"/>
    <property type="evidence" value="ECO:0007669"/>
    <property type="project" value="UniProtKB-UniRule"/>
</dbReference>
<dbReference type="GO" id="GO:0030145">
    <property type="term" value="F:manganese ion binding"/>
    <property type="evidence" value="ECO:0007669"/>
    <property type="project" value="UniProtKB-UniRule"/>
</dbReference>
<dbReference type="GO" id="GO:0004613">
    <property type="term" value="F:phosphoenolpyruvate carboxykinase (GTP) activity"/>
    <property type="evidence" value="ECO:0007669"/>
    <property type="project" value="UniProtKB-UniRule"/>
</dbReference>
<dbReference type="GO" id="GO:0071333">
    <property type="term" value="P:cellular response to glucose stimulus"/>
    <property type="evidence" value="ECO:0007669"/>
    <property type="project" value="TreeGrafter"/>
</dbReference>
<dbReference type="GO" id="GO:0006094">
    <property type="term" value="P:gluconeogenesis"/>
    <property type="evidence" value="ECO:0007669"/>
    <property type="project" value="UniProtKB-UniRule"/>
</dbReference>
<dbReference type="GO" id="GO:0046327">
    <property type="term" value="P:glycerol biosynthetic process from pyruvate"/>
    <property type="evidence" value="ECO:0007669"/>
    <property type="project" value="TreeGrafter"/>
</dbReference>
<dbReference type="GO" id="GO:0006107">
    <property type="term" value="P:oxaloacetate metabolic process"/>
    <property type="evidence" value="ECO:0007669"/>
    <property type="project" value="TreeGrafter"/>
</dbReference>
<dbReference type="GO" id="GO:0019543">
    <property type="term" value="P:propionate catabolic process"/>
    <property type="evidence" value="ECO:0007669"/>
    <property type="project" value="TreeGrafter"/>
</dbReference>
<dbReference type="GO" id="GO:0033993">
    <property type="term" value="P:response to lipid"/>
    <property type="evidence" value="ECO:0007669"/>
    <property type="project" value="TreeGrafter"/>
</dbReference>
<dbReference type="GO" id="GO:0042594">
    <property type="term" value="P:response to starvation"/>
    <property type="evidence" value="ECO:0007669"/>
    <property type="project" value="TreeGrafter"/>
</dbReference>
<dbReference type="CDD" id="cd00819">
    <property type="entry name" value="PEPCK_GTP"/>
    <property type="match status" value="1"/>
</dbReference>
<dbReference type="FunFam" id="3.40.449.10:FF:000005">
    <property type="entry name" value="Phosphoenolpyruvate carboxykinase [GTP]"/>
    <property type="match status" value="1"/>
</dbReference>
<dbReference type="Gene3D" id="3.90.228.20">
    <property type="match status" value="1"/>
</dbReference>
<dbReference type="Gene3D" id="3.40.449.10">
    <property type="entry name" value="Phosphoenolpyruvate Carboxykinase, domain 1"/>
    <property type="match status" value="1"/>
</dbReference>
<dbReference type="Gene3D" id="2.170.8.10">
    <property type="entry name" value="Phosphoenolpyruvate Carboxykinase, domain 2"/>
    <property type="match status" value="1"/>
</dbReference>
<dbReference type="HAMAP" id="MF_00452">
    <property type="entry name" value="PEPCK_GTP"/>
    <property type="match status" value="1"/>
</dbReference>
<dbReference type="InterPro" id="IPR018091">
    <property type="entry name" value="PEP_carboxykin_GTP_CS"/>
</dbReference>
<dbReference type="InterPro" id="IPR013035">
    <property type="entry name" value="PEP_carboxykinase_C"/>
</dbReference>
<dbReference type="InterPro" id="IPR008209">
    <property type="entry name" value="PEP_carboxykinase_GTP"/>
</dbReference>
<dbReference type="InterPro" id="IPR035077">
    <property type="entry name" value="PEP_carboxykinase_GTP_C"/>
</dbReference>
<dbReference type="InterPro" id="IPR035078">
    <property type="entry name" value="PEP_carboxykinase_GTP_N"/>
</dbReference>
<dbReference type="InterPro" id="IPR008210">
    <property type="entry name" value="PEP_carboxykinase_N"/>
</dbReference>
<dbReference type="NCBIfam" id="NF003253">
    <property type="entry name" value="PRK04210.1"/>
    <property type="match status" value="1"/>
</dbReference>
<dbReference type="PANTHER" id="PTHR11561">
    <property type="entry name" value="PHOSPHOENOLPYRUVATE CARBOXYKINASE"/>
    <property type="match status" value="1"/>
</dbReference>
<dbReference type="PANTHER" id="PTHR11561:SF0">
    <property type="entry name" value="PHOSPHOENOLPYRUVATE CARBOXYKINASE [GTP]-RELATED"/>
    <property type="match status" value="1"/>
</dbReference>
<dbReference type="Pfam" id="PF00821">
    <property type="entry name" value="PEPCK_GTP"/>
    <property type="match status" value="1"/>
</dbReference>
<dbReference type="Pfam" id="PF17297">
    <property type="entry name" value="PEPCK_N"/>
    <property type="match status" value="1"/>
</dbReference>
<dbReference type="PIRSF" id="PIRSF001348">
    <property type="entry name" value="PEP_carboxykinase_GTP"/>
    <property type="match status" value="1"/>
</dbReference>
<dbReference type="SUPFAM" id="SSF68923">
    <property type="entry name" value="PEP carboxykinase N-terminal domain"/>
    <property type="match status" value="1"/>
</dbReference>
<dbReference type="SUPFAM" id="SSF53795">
    <property type="entry name" value="PEP carboxykinase-like"/>
    <property type="match status" value="1"/>
</dbReference>
<dbReference type="PROSITE" id="PS00505">
    <property type="entry name" value="PEPCK_GTP"/>
    <property type="match status" value="1"/>
</dbReference>